<accession>A9MKQ6</accession>
<evidence type="ECO:0000255" key="1">
    <source>
        <dbReference type="HAMAP-Rule" id="MF_01601"/>
    </source>
</evidence>
<reference key="1">
    <citation type="submission" date="2007-11" db="EMBL/GenBank/DDBJ databases">
        <authorList>
            <consortium name="The Salmonella enterica serovar Arizonae Genome Sequencing Project"/>
            <person name="McClelland M."/>
            <person name="Sanderson E.K."/>
            <person name="Porwollik S."/>
            <person name="Spieth J."/>
            <person name="Clifton W.S."/>
            <person name="Fulton R."/>
            <person name="Chunyan W."/>
            <person name="Wollam A."/>
            <person name="Shah N."/>
            <person name="Pepin K."/>
            <person name="Bhonagiri V."/>
            <person name="Nash W."/>
            <person name="Johnson M."/>
            <person name="Thiruvilangam P."/>
            <person name="Wilson R."/>
        </authorList>
    </citation>
    <scope>NUCLEOTIDE SEQUENCE [LARGE SCALE GENOMIC DNA]</scope>
    <source>
        <strain>ATCC BAA-731 / CDC346-86 / RSK2980</strain>
    </source>
</reference>
<keyword id="KW-0119">Carbohydrate metabolism</keyword>
<keyword id="KW-0413">Isomerase</keyword>
<keyword id="KW-0521">NADP</keyword>
<keyword id="KW-1185">Reference proteome</keyword>
<comment type="function">
    <text evidence="1">Catalyzes the interconversion between ADP-D-glycero-beta-D-manno-heptose and ADP-L-glycero-beta-D-manno-heptose via an epimerization at carbon 6 of the heptose.</text>
</comment>
<comment type="catalytic activity">
    <reaction evidence="1">
        <text>ADP-D-glycero-beta-D-manno-heptose = ADP-L-glycero-beta-D-manno-heptose</text>
        <dbReference type="Rhea" id="RHEA:17577"/>
        <dbReference type="ChEBI" id="CHEBI:59967"/>
        <dbReference type="ChEBI" id="CHEBI:61506"/>
        <dbReference type="EC" id="5.1.3.20"/>
    </reaction>
</comment>
<comment type="cofactor">
    <cofactor evidence="1">
        <name>NADP(+)</name>
        <dbReference type="ChEBI" id="CHEBI:58349"/>
    </cofactor>
    <text evidence="1">Binds 1 NADP(+) per subunit.</text>
</comment>
<comment type="pathway">
    <text evidence="1">Nucleotide-sugar biosynthesis; ADP-L-glycero-beta-D-manno-heptose biosynthesis; ADP-L-glycero-beta-D-manno-heptose from D-glycero-beta-D-manno-heptose 7-phosphate: step 4/4.</text>
</comment>
<comment type="subunit">
    <text evidence="1">Homopentamer.</text>
</comment>
<comment type="domain">
    <text evidence="1">Contains a large N-terminal NADP-binding domain, and a smaller C-terminal substrate-binding domain.</text>
</comment>
<comment type="similarity">
    <text evidence="1">Belongs to the NAD(P)-dependent epimerase/dehydratase family. HldD subfamily.</text>
</comment>
<proteinExistence type="inferred from homology"/>
<name>HLDD_SALAR</name>
<organism>
    <name type="scientific">Salmonella arizonae (strain ATCC BAA-731 / CDC346-86 / RSK2980)</name>
    <dbReference type="NCBI Taxonomy" id="41514"/>
    <lineage>
        <taxon>Bacteria</taxon>
        <taxon>Pseudomonadati</taxon>
        <taxon>Pseudomonadota</taxon>
        <taxon>Gammaproteobacteria</taxon>
        <taxon>Enterobacterales</taxon>
        <taxon>Enterobacteriaceae</taxon>
        <taxon>Salmonella</taxon>
    </lineage>
</organism>
<feature type="chain" id="PRO_1000088013" description="ADP-L-glycero-D-manno-heptose-6-epimerase">
    <location>
        <begin position="1"/>
        <end position="310"/>
    </location>
</feature>
<feature type="active site" description="Proton acceptor" evidence="1">
    <location>
        <position position="140"/>
    </location>
</feature>
<feature type="active site" description="Proton acceptor" evidence="1">
    <location>
        <position position="178"/>
    </location>
</feature>
<feature type="binding site" evidence="1">
    <location>
        <begin position="10"/>
        <end position="11"/>
    </location>
    <ligand>
        <name>NADP(+)</name>
        <dbReference type="ChEBI" id="CHEBI:58349"/>
    </ligand>
</feature>
<feature type="binding site" evidence="1">
    <location>
        <begin position="31"/>
        <end position="32"/>
    </location>
    <ligand>
        <name>NADP(+)</name>
        <dbReference type="ChEBI" id="CHEBI:58349"/>
    </ligand>
</feature>
<feature type="binding site" evidence="1">
    <location>
        <position position="38"/>
    </location>
    <ligand>
        <name>NADP(+)</name>
        <dbReference type="ChEBI" id="CHEBI:58349"/>
    </ligand>
</feature>
<feature type="binding site" evidence="1">
    <location>
        <position position="53"/>
    </location>
    <ligand>
        <name>NADP(+)</name>
        <dbReference type="ChEBI" id="CHEBI:58349"/>
    </ligand>
</feature>
<feature type="binding site" evidence="1">
    <location>
        <begin position="75"/>
        <end position="79"/>
    </location>
    <ligand>
        <name>NADP(+)</name>
        <dbReference type="ChEBI" id="CHEBI:58349"/>
    </ligand>
</feature>
<feature type="binding site" evidence="1">
    <location>
        <position position="92"/>
    </location>
    <ligand>
        <name>NADP(+)</name>
        <dbReference type="ChEBI" id="CHEBI:58349"/>
    </ligand>
</feature>
<feature type="binding site" evidence="1">
    <location>
        <position position="144"/>
    </location>
    <ligand>
        <name>NADP(+)</name>
        <dbReference type="ChEBI" id="CHEBI:58349"/>
    </ligand>
</feature>
<feature type="binding site" evidence="1">
    <location>
        <position position="169"/>
    </location>
    <ligand>
        <name>substrate</name>
    </ligand>
</feature>
<feature type="binding site" evidence="1">
    <location>
        <position position="170"/>
    </location>
    <ligand>
        <name>NADP(+)</name>
        <dbReference type="ChEBI" id="CHEBI:58349"/>
    </ligand>
</feature>
<feature type="binding site" evidence="1">
    <location>
        <position position="178"/>
    </location>
    <ligand>
        <name>NADP(+)</name>
        <dbReference type="ChEBI" id="CHEBI:58349"/>
    </ligand>
</feature>
<feature type="binding site" evidence="1">
    <location>
        <position position="180"/>
    </location>
    <ligand>
        <name>substrate</name>
    </ligand>
</feature>
<feature type="binding site" evidence="1">
    <location>
        <position position="187"/>
    </location>
    <ligand>
        <name>substrate</name>
    </ligand>
</feature>
<feature type="binding site" evidence="1">
    <location>
        <begin position="201"/>
        <end position="204"/>
    </location>
    <ligand>
        <name>substrate</name>
    </ligand>
</feature>
<feature type="binding site" evidence="1">
    <location>
        <position position="209"/>
    </location>
    <ligand>
        <name>substrate</name>
    </ligand>
</feature>
<feature type="binding site" evidence="1">
    <location>
        <position position="272"/>
    </location>
    <ligand>
        <name>substrate</name>
    </ligand>
</feature>
<sequence>MIIVTGGAGFIGSNIVKALNDKGITDILVVDNLKEGTKFVNLVDLNIADYMDKEDFLIQIMSGEELGDIEAVFHEGACSSTTEWDGKYMMDNNYQYSKELLHYCLEREIPFLYASSAATYGGRTSDFIESREYEKPLNVYGYSKFLFDEYVRQILPEANSQIVGFRYFNVYGPREGHKGSMASVAFHLNTQLNNGESPKLFEGSENFKRDFVYVGDVADVNLWFLESGKSGIFNLGTGRAESFQAVADATLAYHKKGSIEYIPFPDKLKGRYQAFTQADLTNLRNAGYDKPFKTVAEGVTEYMAWLNRDA</sequence>
<gene>
    <name evidence="1" type="primary">hldD</name>
    <name type="ordered locus">SARI_03931</name>
</gene>
<dbReference type="EC" id="5.1.3.20" evidence="1"/>
<dbReference type="EMBL" id="CP000880">
    <property type="protein sequence ID" value="ABX23725.1"/>
    <property type="molecule type" value="Genomic_DNA"/>
</dbReference>
<dbReference type="SMR" id="A9MKQ6"/>
<dbReference type="STRING" id="41514.SARI_03931"/>
<dbReference type="KEGG" id="ses:SARI_03931"/>
<dbReference type="HOGENOM" id="CLU_007383_1_3_6"/>
<dbReference type="UniPathway" id="UPA00356">
    <property type="reaction ID" value="UER00440"/>
</dbReference>
<dbReference type="Proteomes" id="UP000002084">
    <property type="component" value="Chromosome"/>
</dbReference>
<dbReference type="GO" id="GO:0008712">
    <property type="term" value="F:ADP-glyceromanno-heptose 6-epimerase activity"/>
    <property type="evidence" value="ECO:0007669"/>
    <property type="project" value="UniProtKB-UniRule"/>
</dbReference>
<dbReference type="GO" id="GO:0050661">
    <property type="term" value="F:NADP binding"/>
    <property type="evidence" value="ECO:0007669"/>
    <property type="project" value="InterPro"/>
</dbReference>
<dbReference type="GO" id="GO:0097171">
    <property type="term" value="P:ADP-L-glycero-beta-D-manno-heptose biosynthetic process"/>
    <property type="evidence" value="ECO:0007669"/>
    <property type="project" value="UniProtKB-UniPathway"/>
</dbReference>
<dbReference type="GO" id="GO:0005975">
    <property type="term" value="P:carbohydrate metabolic process"/>
    <property type="evidence" value="ECO:0007669"/>
    <property type="project" value="UniProtKB-UniRule"/>
</dbReference>
<dbReference type="CDD" id="cd05248">
    <property type="entry name" value="ADP_GME_SDR_e"/>
    <property type="match status" value="1"/>
</dbReference>
<dbReference type="Gene3D" id="3.40.50.720">
    <property type="entry name" value="NAD(P)-binding Rossmann-like Domain"/>
    <property type="match status" value="1"/>
</dbReference>
<dbReference type="Gene3D" id="3.90.25.10">
    <property type="entry name" value="UDP-galactose 4-epimerase, domain 1"/>
    <property type="match status" value="1"/>
</dbReference>
<dbReference type="HAMAP" id="MF_01601">
    <property type="entry name" value="Heptose_epimerase"/>
    <property type="match status" value="1"/>
</dbReference>
<dbReference type="InterPro" id="IPR001509">
    <property type="entry name" value="Epimerase_deHydtase"/>
</dbReference>
<dbReference type="InterPro" id="IPR011912">
    <property type="entry name" value="Heptose_epim"/>
</dbReference>
<dbReference type="InterPro" id="IPR036291">
    <property type="entry name" value="NAD(P)-bd_dom_sf"/>
</dbReference>
<dbReference type="NCBIfam" id="TIGR02197">
    <property type="entry name" value="heptose_epim"/>
    <property type="match status" value="1"/>
</dbReference>
<dbReference type="NCBIfam" id="NF008360">
    <property type="entry name" value="PRK11150.1"/>
    <property type="match status" value="1"/>
</dbReference>
<dbReference type="PANTHER" id="PTHR43103:SF3">
    <property type="entry name" value="ADP-L-GLYCERO-D-MANNO-HEPTOSE-6-EPIMERASE"/>
    <property type="match status" value="1"/>
</dbReference>
<dbReference type="PANTHER" id="PTHR43103">
    <property type="entry name" value="NUCLEOSIDE-DIPHOSPHATE-SUGAR EPIMERASE"/>
    <property type="match status" value="1"/>
</dbReference>
<dbReference type="Pfam" id="PF01370">
    <property type="entry name" value="Epimerase"/>
    <property type="match status" value="1"/>
</dbReference>
<dbReference type="SUPFAM" id="SSF51735">
    <property type="entry name" value="NAD(P)-binding Rossmann-fold domains"/>
    <property type="match status" value="1"/>
</dbReference>
<protein>
    <recommendedName>
        <fullName evidence="1">ADP-L-glycero-D-manno-heptose-6-epimerase</fullName>
        <ecNumber evidence="1">5.1.3.20</ecNumber>
    </recommendedName>
    <alternativeName>
        <fullName evidence="1">ADP-L-glycero-beta-D-manno-heptose-6-epimerase</fullName>
        <shortName evidence="1">ADP-glyceromanno-heptose 6-epimerase</shortName>
        <shortName evidence="1">ADP-hep 6-epimerase</shortName>
        <shortName evidence="1">AGME</shortName>
    </alternativeName>
</protein>